<comment type="function">
    <text evidence="2">Non-essential component of the volume-regulated anion channel (VRAC, also named VSOAC channel), an anion channel required to maintain a constant cell volume in response to extracellular or intracellular osmotic changes. The VRAC channel conducts iodide better than chloride and can also conduct organic osmolytes like taurine. Mediates efflux of amino acids, such as aspartate, in response to osmotic stress. The VRAC channel also mediates transport of immunoreactive cyclic dinucleotide GMP-AMP (2'-3'-cGAMP), an immune messenger produced in response to DNA virus in the cytosol. Channel activity requires lrrc8a plus at least one other family member (lrrc8b, lrrc8c, lrrc8d or lrrc8e); channel characteristics depend on the precise subunit composition. Also plays a role in lysosome homeostasis by forming functional lysosomal VRAC channels in response to low cytoplasmic ionic strength condition: lysosomal VRAC channels are necessary for the formation of large lysosome-derived vacuoles, which store and then expel excess water to maintain cytosolic water homeostasis.</text>
</comment>
<comment type="catalytic activity">
    <reaction evidence="2">
        <text>chloride(in) = chloride(out)</text>
        <dbReference type="Rhea" id="RHEA:29823"/>
        <dbReference type="ChEBI" id="CHEBI:17996"/>
    </reaction>
</comment>
<comment type="catalytic activity">
    <reaction evidence="2">
        <text>iodide(out) = iodide(in)</text>
        <dbReference type="Rhea" id="RHEA:66324"/>
        <dbReference type="ChEBI" id="CHEBI:16382"/>
    </reaction>
</comment>
<comment type="catalytic activity">
    <reaction evidence="2">
        <text>taurine(out) = taurine(in)</text>
        <dbReference type="Rhea" id="RHEA:66328"/>
        <dbReference type="ChEBI" id="CHEBI:507393"/>
    </reaction>
</comment>
<comment type="catalytic activity">
    <reaction evidence="2">
        <text>2',3'-cGAMP(out) = 2',3'-cGAMP(in)</text>
        <dbReference type="Rhea" id="RHEA:66320"/>
        <dbReference type="ChEBI" id="CHEBI:143093"/>
    </reaction>
    <physiologicalReaction direction="left-to-right" evidence="2">
        <dbReference type="Rhea" id="RHEA:66321"/>
    </physiologicalReaction>
    <physiologicalReaction direction="right-to-left" evidence="2">
        <dbReference type="Rhea" id="RHEA:66322"/>
    </physiologicalReaction>
</comment>
<comment type="subunit">
    <text evidence="2">Heterohexamer; oligomerizes with other LRRC8 proteins (lrrc8a, lrrc8c, lrrc8d and/or lrrc8b) to form a heterohexamer. Detected in a channel complex that contains lrrc8a, lrrc8c and lrrc8e. In vivo, the subunit composition may depend primarily on expression levels, and heterooligomeric channels containing various proportions of the different LRRC8 proteins may coexist.</text>
</comment>
<comment type="subcellular location">
    <subcellularLocation>
        <location evidence="2">Cell membrane</location>
        <topology evidence="2">Multi-pass membrane protein</topology>
    </subcellularLocation>
    <subcellularLocation>
        <location evidence="2">Endoplasmic reticulum membrane</location>
    </subcellularLocation>
    <subcellularLocation>
        <location evidence="2">Lysosome membrane</location>
        <topology evidence="2">Multi-pass membrane protein</topology>
    </subcellularLocation>
    <subcellularLocation>
        <location evidence="2">Endoplasmic reticulum membrane</location>
        <topology evidence="2">Multi-pass membrane protein</topology>
    </subcellularLocation>
    <text evidence="2">In the absence of lrrc8a, resides primarily in the endoplasmic reticulum. Requires lrrc8a for localization at the cell membrane or lysosome membrane.</text>
</comment>
<comment type="domain">
    <text evidence="4">The volume-regulated anion channel (VRAC) channel forms a trimer of dimers, with symmetry mismatch between the pore-forming domain and the cytosolic LRR repeats, a topology similar to gap junction proteins.</text>
</comment>
<comment type="similarity">
    <text evidence="8">Belongs to the LRRC8 family.</text>
</comment>
<organism>
    <name type="scientific">Xenopus tropicalis</name>
    <name type="common">Western clawed frog</name>
    <name type="synonym">Silurana tropicalis</name>
    <dbReference type="NCBI Taxonomy" id="8364"/>
    <lineage>
        <taxon>Eukaryota</taxon>
        <taxon>Metazoa</taxon>
        <taxon>Chordata</taxon>
        <taxon>Craniata</taxon>
        <taxon>Vertebrata</taxon>
        <taxon>Euteleostomi</taxon>
        <taxon>Amphibia</taxon>
        <taxon>Batrachia</taxon>
        <taxon>Anura</taxon>
        <taxon>Pipoidea</taxon>
        <taxon>Pipidae</taxon>
        <taxon>Xenopodinae</taxon>
        <taxon>Xenopus</taxon>
        <taxon>Silurana</taxon>
    </lineage>
</organism>
<sequence length="806" mass="92205">MIPVAEFKQFTEQQPAFKVLKPWWDVLAEYITYAMLMIGVFGCTLQVTQDKIICLPNHTSADVVSQITCQEYDQQSPPSNDSDLETTIPPPTATSSPPREMSGLRNNLDLQQYSFINQMCYETALHWYAKYFPYLVVIHTLIFIICGNFWFKFPGTSSKIEHFISILGKCFDSPWTTRALSEVSGESSQEKPSQERSIDRELSKPNFEEGSPATADLPIAEKLVAETSSASVLDKKEGEQAKALFEKVKKFRHHVEEGDLLYSMYMRQTVLKVCKFVLITIYNAVLVGKIHFIVPCSVHTEDMTGYNSFCCNHTKAHLFSKLAITYLCFLGVYGLTCLYTLYWLFRRPLKEYSFRSVREETGIGDIPDVKNDFAFVLHLVDQYDSLYSKRFAVFLSEVSESRLRQLNLNHEWPADKLRQKLQHTPEGRLELHLFKLPGLPDTVFEVAEMESLKLEMVNEALIPPLVSKLVRLEELSLINCTAKVQHASLAYLRDHLRILQVKFDDIKEIPLWIFSLRALEELHLFGWLSQDLSKNPALESLRELKSLKVLTIKSNLSKIPATVADVAGHLQKFSIHNDGTKLLTLNALKRLALVKELELVRCELERIPHAVFSLTNLQVLDLKENTLHTIEEIISLQHCRKLSVLRLWHNQIAYIPEHIRKLKGLEELSLNRNKILVIPSQLFLCNKLRHLDLSNNEIRELPPEIGVLQLLQYLGLSGNFLEDLPNELFFCQKLKTLKLGQNRLGNLSPKVGSLVCLVKLELKGNRMDTLPPELGNCVSLKRSGLTVEPSLFETLPVEVRDKLKED</sequence>
<keyword id="KW-1003">Cell membrane</keyword>
<keyword id="KW-1015">Disulfide bond</keyword>
<keyword id="KW-0256">Endoplasmic reticulum</keyword>
<keyword id="KW-0325">Glycoprotein</keyword>
<keyword id="KW-0407">Ion channel</keyword>
<keyword id="KW-0406">Ion transport</keyword>
<keyword id="KW-0433">Leucine-rich repeat</keyword>
<keyword id="KW-0458">Lysosome</keyword>
<keyword id="KW-0472">Membrane</keyword>
<keyword id="KW-1185">Reference proteome</keyword>
<keyword id="KW-0677">Repeat</keyword>
<keyword id="KW-0812">Transmembrane</keyword>
<keyword id="KW-1133">Transmembrane helix</keyword>
<keyword id="KW-0813">Transport</keyword>
<name>LRC8E_XENTR</name>
<proteinExistence type="evidence at transcript level"/>
<gene>
    <name evidence="2" type="primary">lrrc8e</name>
    <name evidence="7" type="ORF">TNeu081m12.1</name>
</gene>
<feature type="chain" id="PRO_0000076254" description="Volume-regulated anion channel subunit LRRC8E">
    <location>
        <begin position="1"/>
        <end position="806"/>
    </location>
</feature>
<feature type="topological domain" description="Cytoplasmic" evidence="8">
    <location>
        <begin position="1"/>
        <end position="22"/>
    </location>
</feature>
<feature type="transmembrane region" description="Helical; Name=1" evidence="5">
    <location>
        <begin position="23"/>
        <end position="43"/>
    </location>
</feature>
<feature type="topological domain" description="Extracellular" evidence="8">
    <location>
        <begin position="44"/>
        <end position="130"/>
    </location>
</feature>
<feature type="transmembrane region" description="Helical; Name=2" evidence="5">
    <location>
        <begin position="131"/>
        <end position="151"/>
    </location>
</feature>
<feature type="topological domain" description="Cytoplasmic" evidence="8">
    <location>
        <begin position="152"/>
        <end position="275"/>
    </location>
</feature>
<feature type="transmembrane region" description="Helical; Name=3" evidence="5">
    <location>
        <begin position="276"/>
        <end position="296"/>
    </location>
</feature>
<feature type="topological domain" description="Extracellular" evidence="8">
    <location>
        <begin position="297"/>
        <end position="323"/>
    </location>
</feature>
<feature type="transmembrane region" description="Helical; Name=4" evidence="5">
    <location>
        <begin position="324"/>
        <end position="344"/>
    </location>
</feature>
<feature type="topological domain" description="Cytoplasmic" evidence="8">
    <location>
        <begin position="345"/>
        <end position="806"/>
    </location>
</feature>
<feature type="repeat" description="LRR 1">
    <location>
        <begin position="544"/>
        <end position="566"/>
    </location>
</feature>
<feature type="repeat" description="LRR 2">
    <location>
        <begin position="569"/>
        <end position="589"/>
    </location>
</feature>
<feature type="repeat" description="LRR 3">
    <location>
        <begin position="593"/>
        <end position="614"/>
    </location>
</feature>
<feature type="repeat" description="LRR 4">
    <location>
        <begin position="616"/>
        <end position="637"/>
    </location>
</feature>
<feature type="repeat" description="LRR 5">
    <location>
        <begin position="641"/>
        <end position="662"/>
    </location>
</feature>
<feature type="repeat" description="LRR 6">
    <location>
        <begin position="664"/>
        <end position="685"/>
    </location>
</feature>
<feature type="repeat" description="LRR 7">
    <location>
        <begin position="687"/>
        <end position="708"/>
    </location>
</feature>
<feature type="repeat" description="LRR 8">
    <location>
        <begin position="710"/>
        <end position="731"/>
    </location>
</feature>
<feature type="repeat" description="LRR 9">
    <location>
        <begin position="733"/>
        <end position="754"/>
    </location>
</feature>
<feature type="repeat" description="LRR 10">
    <location>
        <begin position="756"/>
        <end position="777"/>
    </location>
</feature>
<feature type="region of interest" description="Disordered" evidence="6">
    <location>
        <begin position="72"/>
        <end position="103"/>
    </location>
</feature>
<feature type="region of interest" description="Disordered" evidence="6">
    <location>
        <begin position="182"/>
        <end position="213"/>
    </location>
</feature>
<feature type="compositionally biased region" description="Polar residues" evidence="6">
    <location>
        <begin position="72"/>
        <end position="81"/>
    </location>
</feature>
<feature type="compositionally biased region" description="Basic and acidic residues" evidence="6">
    <location>
        <begin position="188"/>
        <end position="207"/>
    </location>
</feature>
<feature type="glycosylation site" description="N-linked (GlcNAc...) asparagine" evidence="5">
    <location>
        <position position="57"/>
    </location>
</feature>
<feature type="glycosylation site" description="N-linked (GlcNAc...) asparagine" evidence="5">
    <location>
        <position position="80"/>
    </location>
</feature>
<feature type="glycosylation site" description="N-linked (GlcNAc...) asparagine" evidence="5">
    <location>
        <position position="312"/>
    </location>
</feature>
<feature type="disulfide bond" evidence="3">
    <location>
        <begin position="54"/>
        <end position="311"/>
    </location>
</feature>
<evidence type="ECO:0000250" key="1">
    <source>
        <dbReference type="UniProtKB" id="Q66JT1"/>
    </source>
</evidence>
<evidence type="ECO:0000250" key="2">
    <source>
        <dbReference type="UniProtKB" id="Q6NSJ5"/>
    </source>
</evidence>
<evidence type="ECO:0000250" key="3">
    <source>
        <dbReference type="UniProtKB" id="Q80WG5"/>
    </source>
</evidence>
<evidence type="ECO:0000250" key="4">
    <source>
        <dbReference type="UniProtKB" id="Q8IWT6"/>
    </source>
</evidence>
<evidence type="ECO:0000255" key="5"/>
<evidence type="ECO:0000256" key="6">
    <source>
        <dbReference type="SAM" id="MobiDB-lite"/>
    </source>
</evidence>
<evidence type="ECO:0000303" key="7">
    <source ref="1"/>
</evidence>
<evidence type="ECO:0000305" key="8"/>
<accession>Q68F79</accession>
<accession>Q28BV4</accession>
<reference key="1">
    <citation type="submission" date="2006-03" db="EMBL/GenBank/DDBJ databases">
        <authorList>
            <consortium name="Sanger Xenopus tropicalis EST/cDNA project"/>
        </authorList>
    </citation>
    <scope>NUCLEOTIDE SEQUENCE [LARGE SCALE MRNA]</scope>
    <source>
        <tissue>Neurula</tissue>
    </source>
</reference>
<reference key="2">
    <citation type="submission" date="2004-08" db="EMBL/GenBank/DDBJ databases">
        <authorList>
            <consortium name="NIH - Xenopus Gene Collection (XGC) project"/>
        </authorList>
    </citation>
    <scope>NUCLEOTIDE SEQUENCE [LARGE SCALE MRNA]</scope>
</reference>
<protein>
    <recommendedName>
        <fullName evidence="1">Volume-regulated anion channel subunit LRRC8E</fullName>
    </recommendedName>
    <alternativeName>
        <fullName evidence="2">Leucine-rich repeat-containing protein 8E</fullName>
    </alternativeName>
</protein>
<dbReference type="EMBL" id="CR942616">
    <property type="protein sequence ID" value="CAJ82818.1"/>
    <property type="molecule type" value="mRNA"/>
</dbReference>
<dbReference type="EMBL" id="BC079964">
    <property type="protein sequence ID" value="AAH79964.1"/>
    <property type="molecule type" value="mRNA"/>
</dbReference>
<dbReference type="RefSeq" id="NP_001007863.1">
    <property type="nucleotide sequence ID" value="NM_001007862.1"/>
</dbReference>
<dbReference type="RefSeq" id="XP_012808517.1">
    <property type="nucleotide sequence ID" value="XM_012953063.3"/>
</dbReference>
<dbReference type="SMR" id="Q68F79"/>
<dbReference type="FunCoup" id="Q68F79">
    <property type="interactions" value="317"/>
</dbReference>
<dbReference type="STRING" id="8364.ENSXETP00000030982"/>
<dbReference type="GlyCosmos" id="Q68F79">
    <property type="glycosylation" value="3 sites, No reported glycans"/>
</dbReference>
<dbReference type="PaxDb" id="8364-ENSXETP00000049449"/>
<dbReference type="DNASU" id="493249"/>
<dbReference type="GeneID" id="493249"/>
<dbReference type="KEGG" id="xtr:493249"/>
<dbReference type="AGR" id="Xenbase:XB-GENE-6041092"/>
<dbReference type="CTD" id="80131"/>
<dbReference type="Xenbase" id="XB-GENE-6041092">
    <property type="gene designation" value="lrrc8e"/>
</dbReference>
<dbReference type="eggNOG" id="KOG0619">
    <property type="taxonomic scope" value="Eukaryota"/>
</dbReference>
<dbReference type="HOGENOM" id="CLU_019019_0_0_1"/>
<dbReference type="InParanoid" id="Q68F79"/>
<dbReference type="OMA" id="MNDIPDV"/>
<dbReference type="OrthoDB" id="2021138at2759"/>
<dbReference type="PhylomeDB" id="Q68F79"/>
<dbReference type="TreeFam" id="TF331443"/>
<dbReference type="Proteomes" id="UP000008143">
    <property type="component" value="Chromosome 3"/>
</dbReference>
<dbReference type="Bgee" id="ENSXETG00000022859">
    <property type="expression patterns" value="Expressed in gastrula and 11 other cell types or tissues"/>
</dbReference>
<dbReference type="GO" id="GO:0005737">
    <property type="term" value="C:cytoplasm"/>
    <property type="evidence" value="ECO:0000250"/>
    <property type="project" value="UniProtKB"/>
</dbReference>
<dbReference type="GO" id="GO:0005789">
    <property type="term" value="C:endoplasmic reticulum membrane"/>
    <property type="evidence" value="ECO:0007669"/>
    <property type="project" value="UniProtKB-SubCell"/>
</dbReference>
<dbReference type="GO" id="GO:0005765">
    <property type="term" value="C:lysosomal membrane"/>
    <property type="evidence" value="ECO:0000250"/>
    <property type="project" value="UniProtKB"/>
</dbReference>
<dbReference type="GO" id="GO:0034702">
    <property type="term" value="C:monoatomic ion channel complex"/>
    <property type="evidence" value="ECO:0000250"/>
    <property type="project" value="UniProtKB"/>
</dbReference>
<dbReference type="GO" id="GO:0005886">
    <property type="term" value="C:plasma membrane"/>
    <property type="evidence" value="ECO:0000250"/>
    <property type="project" value="UniProtKB"/>
</dbReference>
<dbReference type="GO" id="GO:0015810">
    <property type="term" value="P:aspartate transmembrane transport"/>
    <property type="evidence" value="ECO:0000250"/>
    <property type="project" value="UniProtKB"/>
</dbReference>
<dbReference type="GO" id="GO:0006884">
    <property type="term" value="P:cell volume homeostasis"/>
    <property type="evidence" value="ECO:0000250"/>
    <property type="project" value="UniProtKB"/>
</dbReference>
<dbReference type="GO" id="GO:0071470">
    <property type="term" value="P:cellular response to osmotic stress"/>
    <property type="evidence" value="ECO:0000250"/>
    <property type="project" value="UniProtKB"/>
</dbReference>
<dbReference type="GO" id="GO:0140361">
    <property type="term" value="P:cyclic-GMP-AMP transmembrane import across plasma membrane"/>
    <property type="evidence" value="ECO:0000250"/>
    <property type="project" value="UniProtKB"/>
</dbReference>
<dbReference type="GO" id="GO:0098656">
    <property type="term" value="P:monoatomic anion transmembrane transport"/>
    <property type="evidence" value="ECO:0000250"/>
    <property type="project" value="UniProtKB"/>
</dbReference>
<dbReference type="FunFam" id="3.80.10.10:FF:000123">
    <property type="entry name" value="Volume-regulated anion channel subunit LRRC8D"/>
    <property type="match status" value="1"/>
</dbReference>
<dbReference type="Gene3D" id="3.80.10.10">
    <property type="entry name" value="Ribonuclease Inhibitor"/>
    <property type="match status" value="1"/>
</dbReference>
<dbReference type="InterPro" id="IPR001611">
    <property type="entry name" value="Leu-rich_rpt"/>
</dbReference>
<dbReference type="InterPro" id="IPR003591">
    <property type="entry name" value="Leu-rich_rpt_typical-subtyp"/>
</dbReference>
<dbReference type="InterPro" id="IPR032675">
    <property type="entry name" value="LRR_dom_sf"/>
</dbReference>
<dbReference type="InterPro" id="IPR050216">
    <property type="entry name" value="LRR_domain-containing"/>
</dbReference>
<dbReference type="InterPro" id="IPR021040">
    <property type="entry name" value="LRRC8_Pannexin-like"/>
</dbReference>
<dbReference type="PANTHER" id="PTHR48051">
    <property type="match status" value="1"/>
</dbReference>
<dbReference type="PANTHER" id="PTHR48051:SF1">
    <property type="entry name" value="RAS SUPPRESSOR PROTEIN 1"/>
    <property type="match status" value="1"/>
</dbReference>
<dbReference type="Pfam" id="PF13855">
    <property type="entry name" value="LRR_8"/>
    <property type="match status" value="3"/>
</dbReference>
<dbReference type="Pfam" id="PF12534">
    <property type="entry name" value="Pannexin_like"/>
    <property type="match status" value="1"/>
</dbReference>
<dbReference type="SMART" id="SM00369">
    <property type="entry name" value="LRR_TYP"/>
    <property type="match status" value="6"/>
</dbReference>
<dbReference type="SUPFAM" id="SSF52058">
    <property type="entry name" value="L domain-like"/>
    <property type="match status" value="1"/>
</dbReference>
<dbReference type="PROSITE" id="PS51450">
    <property type="entry name" value="LRR"/>
    <property type="match status" value="7"/>
</dbReference>